<gene>
    <name evidence="1" type="primary">folE2</name>
    <name type="ordered locus">BTH_II0615</name>
</gene>
<organism>
    <name type="scientific">Burkholderia thailandensis (strain ATCC 700388 / DSM 13276 / CCUG 48851 / CIP 106301 / E264)</name>
    <dbReference type="NCBI Taxonomy" id="271848"/>
    <lineage>
        <taxon>Bacteria</taxon>
        <taxon>Pseudomonadati</taxon>
        <taxon>Pseudomonadota</taxon>
        <taxon>Betaproteobacteria</taxon>
        <taxon>Burkholderiales</taxon>
        <taxon>Burkholderiaceae</taxon>
        <taxon>Burkholderia</taxon>
        <taxon>pseudomallei group</taxon>
    </lineage>
</organism>
<accession>Q2T7N4</accession>
<keyword id="KW-0378">Hydrolase</keyword>
<reference key="1">
    <citation type="journal article" date="2005" name="BMC Genomics">
        <title>Bacterial genome adaptation to niches: divergence of the potential virulence genes in three Burkholderia species of different survival strategies.</title>
        <authorList>
            <person name="Kim H.S."/>
            <person name="Schell M.A."/>
            <person name="Yu Y."/>
            <person name="Ulrich R.L."/>
            <person name="Sarria S.H."/>
            <person name="Nierman W.C."/>
            <person name="DeShazer D."/>
        </authorList>
    </citation>
    <scope>NUCLEOTIDE SEQUENCE [LARGE SCALE GENOMIC DNA]</scope>
    <source>
        <strain>ATCC 700388 / DSM 13276 / CCUG 48851 / CIP 106301 / E264</strain>
    </source>
</reference>
<sequence>MNLMNPEFVMPDVQSTVDTRQMPIQRVGVRAVRHPLTVRTAEGETQATVGTWNLDVHLPADQKGTHMSRFVALLEESGGPLTADAFRAMLATMLEKLEAQAGRIEVSFPYFVNKTAPVSGVRSLLDYEVTLTGDVRDGLTRVFAKVLVPVTSLCPCSKKISQYGAHNQRSHVTIDAELAADVPVEDLIRIAEEEASCELWGLLKRPDEKFVTERAYENPKFVEDLVRDVARRLDADERIVAYVLEAENFESIHNHSAYALIERDKRRRA</sequence>
<comment type="function">
    <text evidence="1">Converts GTP to 7,8-dihydroneopterin triphosphate.</text>
</comment>
<comment type="catalytic activity">
    <reaction evidence="1">
        <text>GTP + H2O = 7,8-dihydroneopterin 3'-triphosphate + formate + H(+)</text>
        <dbReference type="Rhea" id="RHEA:17473"/>
        <dbReference type="ChEBI" id="CHEBI:15377"/>
        <dbReference type="ChEBI" id="CHEBI:15378"/>
        <dbReference type="ChEBI" id="CHEBI:15740"/>
        <dbReference type="ChEBI" id="CHEBI:37565"/>
        <dbReference type="ChEBI" id="CHEBI:58462"/>
        <dbReference type="EC" id="3.5.4.16"/>
    </reaction>
</comment>
<comment type="pathway">
    <text evidence="1">Cofactor biosynthesis; 7,8-dihydroneopterin triphosphate biosynthesis; 7,8-dihydroneopterin triphosphate from GTP: step 1/1.</text>
</comment>
<comment type="similarity">
    <text evidence="1">Belongs to the GTP cyclohydrolase IV family.</text>
</comment>
<comment type="sequence caution" evidence="2">
    <conflict type="erroneous initiation">
        <sequence resource="EMBL-CDS" id="ABC35595"/>
    </conflict>
</comment>
<feature type="chain" id="PRO_0000289483" description="GTP cyclohydrolase FolE2">
    <location>
        <begin position="1"/>
        <end position="269"/>
    </location>
</feature>
<feature type="site" description="May be catalytically important" evidence="1">
    <location>
        <position position="154"/>
    </location>
</feature>
<name>GCH4_BURTA</name>
<proteinExistence type="inferred from homology"/>
<protein>
    <recommendedName>
        <fullName evidence="1">GTP cyclohydrolase FolE2</fullName>
        <ecNumber evidence="1">3.5.4.16</ecNumber>
    </recommendedName>
</protein>
<evidence type="ECO:0000255" key="1">
    <source>
        <dbReference type="HAMAP-Rule" id="MF_01527"/>
    </source>
</evidence>
<evidence type="ECO:0000305" key="2"/>
<dbReference type="EC" id="3.5.4.16" evidence="1"/>
<dbReference type="EMBL" id="CP000085">
    <property type="protein sequence ID" value="ABC35595.1"/>
    <property type="status" value="ALT_INIT"/>
    <property type="molecule type" value="Genomic_DNA"/>
</dbReference>
<dbReference type="RefSeq" id="WP_009895738.1">
    <property type="nucleotide sequence ID" value="NC_007650.1"/>
</dbReference>
<dbReference type="SMR" id="Q2T7N4"/>
<dbReference type="GeneID" id="45118106"/>
<dbReference type="KEGG" id="bte:BTH_II0615"/>
<dbReference type="HOGENOM" id="CLU_062816_1_1_4"/>
<dbReference type="UniPathway" id="UPA00848">
    <property type="reaction ID" value="UER00151"/>
</dbReference>
<dbReference type="Proteomes" id="UP000001930">
    <property type="component" value="Chromosome II"/>
</dbReference>
<dbReference type="GO" id="GO:0003934">
    <property type="term" value="F:GTP cyclohydrolase I activity"/>
    <property type="evidence" value="ECO:0007669"/>
    <property type="project" value="UniProtKB-UniRule"/>
</dbReference>
<dbReference type="GO" id="GO:0046654">
    <property type="term" value="P:tetrahydrofolate biosynthetic process"/>
    <property type="evidence" value="ECO:0007669"/>
    <property type="project" value="UniProtKB-UniRule"/>
</dbReference>
<dbReference type="Gene3D" id="3.10.270.10">
    <property type="entry name" value="Urate Oxidase"/>
    <property type="match status" value="1"/>
</dbReference>
<dbReference type="HAMAP" id="MF_01527_B">
    <property type="entry name" value="GTP_cyclohydrol_B"/>
    <property type="match status" value="1"/>
</dbReference>
<dbReference type="InterPro" id="IPR022838">
    <property type="entry name" value="GTP_cyclohydrolase_FolE2"/>
</dbReference>
<dbReference type="InterPro" id="IPR003801">
    <property type="entry name" value="GTP_cyclohydrolase_FolE2/MptA"/>
</dbReference>
<dbReference type="NCBIfam" id="NF010200">
    <property type="entry name" value="PRK13674.1-1"/>
    <property type="match status" value="1"/>
</dbReference>
<dbReference type="PANTHER" id="PTHR36445">
    <property type="entry name" value="GTP CYCLOHYDROLASE MPTA"/>
    <property type="match status" value="1"/>
</dbReference>
<dbReference type="PANTHER" id="PTHR36445:SF1">
    <property type="entry name" value="GTP CYCLOHYDROLASE MPTA"/>
    <property type="match status" value="1"/>
</dbReference>
<dbReference type="Pfam" id="PF02649">
    <property type="entry name" value="GCHY-1"/>
    <property type="match status" value="1"/>
</dbReference>